<sequence length="66" mass="6656">MKLSFLSLAFAVIFVMAIMYAPQVEAKASADADADADAAASADALAKASAGMLDRILGAVKGFMGS</sequence>
<keyword id="KW-0528">Neurotoxin</keyword>
<keyword id="KW-0964">Secreted</keyword>
<keyword id="KW-0732">Signal</keyword>
<keyword id="KW-0800">Toxin</keyword>
<accession>A0A6M3Z9I6</accession>
<proteinExistence type="evidence at protein level"/>
<reference evidence="8" key="1">
    <citation type="journal article" date="2018" name="J. Proteome Res.">
        <title>Deciphering the Molecular Diversity of an Ant Venom Peptidome through a Venomics Approach.</title>
        <authorList>
            <person name="Touchard A."/>
            <person name="Tene N."/>
            <person name="Song P.C.T."/>
            <person name="Lefranc B."/>
            <person name="Leprince J."/>
            <person name="Treilhou M."/>
            <person name="Bonnafe E."/>
        </authorList>
    </citation>
    <scope>NUCLEOTIDE SEQUENCE [MRNA]</scope>
    <scope>MASS SPECTROMETRY</scope>
    <scope>SUBCELLULAR LOCATION</scope>
    <source>
        <tissue>Venom</tissue>
        <tissue>Venom gland</tissue>
    </source>
</reference>
<reference key="2">
    <citation type="journal article" date="2023" name="Toxins">
        <title>Discovery of an insect neuroactive helix ring peptide from ant venom.</title>
        <authorList>
            <person name="Barasse V."/>
            <person name="Jouvensal L."/>
            <person name="Boy G."/>
            <person name="Billet A."/>
            <person name="Ascoet S."/>
            <person name="Lefranc B."/>
            <person name="Leprince J."/>
            <person name="Dejean A."/>
            <person name="Lacotte V."/>
            <person name="Rahioui I."/>
            <person name="Sivignon C."/>
            <person name="Gaget K."/>
            <person name="Ribeiro Lopes M."/>
            <person name="Calevro F."/>
            <person name="Da Silva P."/>
            <person name="Loth K."/>
            <person name="Paquet F."/>
            <person name="Treilhou M."/>
            <person name="Bonnafe E."/>
            <person name="Touchard A."/>
        </authorList>
    </citation>
    <scope>FUNCTION</scope>
    <scope>BIOASSAY</scope>
    <scope>SYNTHESIS OF 51-66</scope>
</reference>
<name>TX8A_TETBN</name>
<comment type="function">
    <text evidence="3">In vivo, this neurotoxin paralyzes about 50% of blowflies (L.caesar) one hour after intrathoracic injection, when tested at high doses (54 nmol/g).</text>
</comment>
<comment type="subcellular location">
    <subcellularLocation>
        <location evidence="2">Secreted</location>
    </subcellularLocation>
</comment>
<comment type="tissue specificity">
    <text evidence="7">Expressed by the venom gland.</text>
</comment>
<comment type="mass spectrometry" mass="1650.86" method="Electrospray" evidence="2"/>
<comment type="similarity">
    <text evidence="6">Belongs to the formicidae venom precursor-01 superfamily.</text>
</comment>
<dbReference type="EMBL" id="MN397941">
    <property type="protein sequence ID" value="QJP03488.1"/>
    <property type="molecule type" value="mRNA"/>
</dbReference>
<dbReference type="GO" id="GO:0005576">
    <property type="term" value="C:extracellular region"/>
    <property type="evidence" value="ECO:0000314"/>
    <property type="project" value="UniProtKB"/>
</dbReference>
<dbReference type="GO" id="GO:0090729">
    <property type="term" value="F:toxin activity"/>
    <property type="evidence" value="ECO:0007669"/>
    <property type="project" value="UniProtKB-KW"/>
</dbReference>
<dbReference type="InterPro" id="IPR049518">
    <property type="entry name" value="Pilosulin"/>
</dbReference>
<dbReference type="Pfam" id="PF17499">
    <property type="entry name" value="Pilosulin"/>
    <property type="match status" value="1"/>
</dbReference>
<protein>
    <recommendedName>
        <fullName evidence="4 5">U8-myrmicitoxin-Tb1a</fullName>
        <shortName evidence="4 5">U8-MYRTX-Tb1a</shortName>
    </recommendedName>
</protein>
<feature type="signal peptide" evidence="1">
    <location>
        <begin position="1"/>
        <end position="26"/>
    </location>
</feature>
<feature type="propeptide" id="PRO_0000459807" evidence="7">
    <location>
        <begin position="27"/>
        <end position="50"/>
    </location>
</feature>
<feature type="peptide" id="PRO_5026956134" description="U8-myrmicitoxin-Tb1a" evidence="2">
    <location>
        <begin position="51"/>
        <end position="66"/>
    </location>
</feature>
<evidence type="ECO:0000255" key="1"/>
<evidence type="ECO:0000269" key="2">
    <source>
    </source>
</evidence>
<evidence type="ECO:0000269" key="3">
    <source>
    </source>
</evidence>
<evidence type="ECO:0000303" key="4">
    <source>
    </source>
</evidence>
<evidence type="ECO:0000303" key="5">
    <source>
    </source>
</evidence>
<evidence type="ECO:0000305" key="6"/>
<evidence type="ECO:0000305" key="7">
    <source>
    </source>
</evidence>
<evidence type="ECO:0000312" key="8">
    <source>
        <dbReference type="EMBL" id="QJP03488.1"/>
    </source>
</evidence>
<organism>
    <name type="scientific">Tetramorium bicarinatum</name>
    <name type="common">Tramp ant</name>
    <dbReference type="NCBI Taxonomy" id="219812"/>
    <lineage>
        <taxon>Eukaryota</taxon>
        <taxon>Metazoa</taxon>
        <taxon>Ecdysozoa</taxon>
        <taxon>Arthropoda</taxon>
        <taxon>Hexapoda</taxon>
        <taxon>Insecta</taxon>
        <taxon>Pterygota</taxon>
        <taxon>Neoptera</taxon>
        <taxon>Endopterygota</taxon>
        <taxon>Hymenoptera</taxon>
        <taxon>Apocrita</taxon>
        <taxon>Aculeata</taxon>
        <taxon>Formicoidea</taxon>
        <taxon>Formicidae</taxon>
        <taxon>Myrmicinae</taxon>
        <taxon>Tetramorium</taxon>
    </lineage>
</organism>